<sequence>MSETQNHNSYGKPVEMTVIGAGSYGTSLAISLARNGANIVLWGHDAEHMARLDADRANHEFLPGIAFPDTLIVETDLQKAVQASRDLLVVVPSHVFGIVLKSLQPHLRADSRICWATKGLEPETGRLLQDVAHDVLGDSYPLAVLSGPTFAKELAMGMPTAISVASPDAQFVRDLQEKIHCSKTFRVYANSDFIGMQLGGAVKNVIAIGAGMSDGIGFGANARTALITRGLAEMSRLGAALGAQPETFMGMAGLGDLVLTCTDNQSRNRRFGLALGQGKDVDTAQTDIGQVVEGYRNTKEVWMLAKRMGVEMPIVEQIYQVLYQGKDARLAAQDLLARDKKMER</sequence>
<evidence type="ECO:0000255" key="1">
    <source>
        <dbReference type="HAMAP-Rule" id="MF_00394"/>
    </source>
</evidence>
<gene>
    <name evidence="1" type="primary">gpsA</name>
    <name type="ordered locus">VC_2651</name>
</gene>
<name>GPDA_VIBCH</name>
<keyword id="KW-0963">Cytoplasm</keyword>
<keyword id="KW-0444">Lipid biosynthesis</keyword>
<keyword id="KW-0443">Lipid metabolism</keyword>
<keyword id="KW-0520">NAD</keyword>
<keyword id="KW-0521">NADP</keyword>
<keyword id="KW-0547">Nucleotide-binding</keyword>
<keyword id="KW-0560">Oxidoreductase</keyword>
<keyword id="KW-0594">Phospholipid biosynthesis</keyword>
<keyword id="KW-1208">Phospholipid metabolism</keyword>
<keyword id="KW-1185">Reference proteome</keyword>
<organism>
    <name type="scientific">Vibrio cholerae serotype O1 (strain ATCC 39315 / El Tor Inaba N16961)</name>
    <dbReference type="NCBI Taxonomy" id="243277"/>
    <lineage>
        <taxon>Bacteria</taxon>
        <taxon>Pseudomonadati</taxon>
        <taxon>Pseudomonadota</taxon>
        <taxon>Gammaproteobacteria</taxon>
        <taxon>Vibrionales</taxon>
        <taxon>Vibrionaceae</taxon>
        <taxon>Vibrio</taxon>
    </lineage>
</organism>
<accession>Q9KNT0</accession>
<protein>
    <recommendedName>
        <fullName evidence="1">Glycerol-3-phosphate dehydrogenase [NAD(P)+]</fullName>
        <ecNumber evidence="1">1.1.1.94</ecNumber>
    </recommendedName>
    <alternativeName>
        <fullName evidence="1">NAD(P)(+)-dependent glycerol-3-phosphate dehydrogenase</fullName>
    </alternativeName>
    <alternativeName>
        <fullName evidence="1">NAD(P)H-dependent dihydroxyacetone-phosphate reductase</fullName>
    </alternativeName>
</protein>
<feature type="chain" id="PRO_0000138054" description="Glycerol-3-phosphate dehydrogenase [NAD(P)+]">
    <location>
        <begin position="1"/>
        <end position="344"/>
    </location>
</feature>
<feature type="active site" description="Proton acceptor" evidence="1">
    <location>
        <position position="203"/>
    </location>
</feature>
<feature type="binding site" evidence="1">
    <location>
        <position position="23"/>
    </location>
    <ligand>
        <name>NADPH</name>
        <dbReference type="ChEBI" id="CHEBI:57783"/>
    </ligand>
</feature>
<feature type="binding site" evidence="1">
    <location>
        <position position="24"/>
    </location>
    <ligand>
        <name>NADPH</name>
        <dbReference type="ChEBI" id="CHEBI:57783"/>
    </ligand>
</feature>
<feature type="binding site" evidence="1">
    <location>
        <position position="44"/>
    </location>
    <ligand>
        <name>NADPH</name>
        <dbReference type="ChEBI" id="CHEBI:57783"/>
    </ligand>
</feature>
<feature type="binding site" evidence="1">
    <location>
        <position position="118"/>
    </location>
    <ligand>
        <name>NADPH</name>
        <dbReference type="ChEBI" id="CHEBI:57783"/>
    </ligand>
</feature>
<feature type="binding site" evidence="1">
    <location>
        <position position="118"/>
    </location>
    <ligand>
        <name>sn-glycerol 3-phosphate</name>
        <dbReference type="ChEBI" id="CHEBI:57597"/>
    </ligand>
</feature>
<feature type="binding site" evidence="1">
    <location>
        <position position="147"/>
    </location>
    <ligand>
        <name>sn-glycerol 3-phosphate</name>
        <dbReference type="ChEBI" id="CHEBI:57597"/>
    </ligand>
</feature>
<feature type="binding site" evidence="1">
    <location>
        <position position="149"/>
    </location>
    <ligand>
        <name>sn-glycerol 3-phosphate</name>
        <dbReference type="ChEBI" id="CHEBI:57597"/>
    </ligand>
</feature>
<feature type="binding site" evidence="1">
    <location>
        <position position="151"/>
    </location>
    <ligand>
        <name>NADPH</name>
        <dbReference type="ChEBI" id="CHEBI:57783"/>
    </ligand>
</feature>
<feature type="binding site" evidence="1">
    <location>
        <position position="203"/>
    </location>
    <ligand>
        <name>sn-glycerol 3-phosphate</name>
        <dbReference type="ChEBI" id="CHEBI:57597"/>
    </ligand>
</feature>
<feature type="binding site" evidence="1">
    <location>
        <position position="256"/>
    </location>
    <ligand>
        <name>sn-glycerol 3-phosphate</name>
        <dbReference type="ChEBI" id="CHEBI:57597"/>
    </ligand>
</feature>
<feature type="binding site" evidence="1">
    <location>
        <position position="266"/>
    </location>
    <ligand>
        <name>sn-glycerol 3-phosphate</name>
        <dbReference type="ChEBI" id="CHEBI:57597"/>
    </ligand>
</feature>
<feature type="binding site" evidence="1">
    <location>
        <position position="267"/>
    </location>
    <ligand>
        <name>NADPH</name>
        <dbReference type="ChEBI" id="CHEBI:57783"/>
    </ligand>
</feature>
<feature type="binding site" evidence="1">
    <location>
        <position position="267"/>
    </location>
    <ligand>
        <name>sn-glycerol 3-phosphate</name>
        <dbReference type="ChEBI" id="CHEBI:57597"/>
    </ligand>
</feature>
<feature type="binding site" evidence="1">
    <location>
        <position position="268"/>
    </location>
    <ligand>
        <name>sn-glycerol 3-phosphate</name>
        <dbReference type="ChEBI" id="CHEBI:57597"/>
    </ligand>
</feature>
<feature type="binding site" evidence="1">
    <location>
        <position position="291"/>
    </location>
    <ligand>
        <name>NADPH</name>
        <dbReference type="ChEBI" id="CHEBI:57783"/>
    </ligand>
</feature>
<feature type="binding site" evidence="1">
    <location>
        <position position="293"/>
    </location>
    <ligand>
        <name>NADPH</name>
        <dbReference type="ChEBI" id="CHEBI:57783"/>
    </ligand>
</feature>
<comment type="function">
    <text evidence="1">Catalyzes the reduction of the glycolytic intermediate dihydroxyacetone phosphate (DHAP) to sn-glycerol 3-phosphate (G3P), the key precursor for phospholipid synthesis.</text>
</comment>
<comment type="catalytic activity">
    <reaction evidence="1">
        <text>sn-glycerol 3-phosphate + NAD(+) = dihydroxyacetone phosphate + NADH + H(+)</text>
        <dbReference type="Rhea" id="RHEA:11092"/>
        <dbReference type="ChEBI" id="CHEBI:15378"/>
        <dbReference type="ChEBI" id="CHEBI:57540"/>
        <dbReference type="ChEBI" id="CHEBI:57597"/>
        <dbReference type="ChEBI" id="CHEBI:57642"/>
        <dbReference type="ChEBI" id="CHEBI:57945"/>
        <dbReference type="EC" id="1.1.1.94"/>
    </reaction>
    <physiologicalReaction direction="right-to-left" evidence="1">
        <dbReference type="Rhea" id="RHEA:11094"/>
    </physiologicalReaction>
</comment>
<comment type="catalytic activity">
    <reaction evidence="1">
        <text>sn-glycerol 3-phosphate + NADP(+) = dihydroxyacetone phosphate + NADPH + H(+)</text>
        <dbReference type="Rhea" id="RHEA:11096"/>
        <dbReference type="ChEBI" id="CHEBI:15378"/>
        <dbReference type="ChEBI" id="CHEBI:57597"/>
        <dbReference type="ChEBI" id="CHEBI:57642"/>
        <dbReference type="ChEBI" id="CHEBI:57783"/>
        <dbReference type="ChEBI" id="CHEBI:58349"/>
        <dbReference type="EC" id="1.1.1.94"/>
    </reaction>
    <physiologicalReaction direction="right-to-left" evidence="1">
        <dbReference type="Rhea" id="RHEA:11098"/>
    </physiologicalReaction>
</comment>
<comment type="pathway">
    <text evidence="1">Membrane lipid metabolism; glycerophospholipid metabolism.</text>
</comment>
<comment type="subcellular location">
    <subcellularLocation>
        <location evidence="1">Cytoplasm</location>
    </subcellularLocation>
</comment>
<comment type="similarity">
    <text evidence="1">Belongs to the NAD-dependent glycerol-3-phosphate dehydrogenase family.</text>
</comment>
<proteinExistence type="inferred from homology"/>
<reference key="1">
    <citation type="journal article" date="2000" name="Nature">
        <title>DNA sequence of both chromosomes of the cholera pathogen Vibrio cholerae.</title>
        <authorList>
            <person name="Heidelberg J.F."/>
            <person name="Eisen J.A."/>
            <person name="Nelson W.C."/>
            <person name="Clayton R.A."/>
            <person name="Gwinn M.L."/>
            <person name="Dodson R.J."/>
            <person name="Haft D.H."/>
            <person name="Hickey E.K."/>
            <person name="Peterson J.D."/>
            <person name="Umayam L.A."/>
            <person name="Gill S.R."/>
            <person name="Nelson K.E."/>
            <person name="Read T.D."/>
            <person name="Tettelin H."/>
            <person name="Richardson D.L."/>
            <person name="Ermolaeva M.D."/>
            <person name="Vamathevan J.J."/>
            <person name="Bass S."/>
            <person name="Qin H."/>
            <person name="Dragoi I."/>
            <person name="Sellers P."/>
            <person name="McDonald L.A."/>
            <person name="Utterback T.R."/>
            <person name="Fleischmann R.D."/>
            <person name="Nierman W.C."/>
            <person name="White O."/>
            <person name="Salzberg S.L."/>
            <person name="Smith H.O."/>
            <person name="Colwell R.R."/>
            <person name="Mekalanos J.J."/>
            <person name="Venter J.C."/>
            <person name="Fraser C.M."/>
        </authorList>
    </citation>
    <scope>NUCLEOTIDE SEQUENCE [LARGE SCALE GENOMIC DNA]</scope>
    <source>
        <strain>ATCC 39315 / El Tor Inaba N16961</strain>
    </source>
</reference>
<dbReference type="EC" id="1.1.1.94" evidence="1"/>
<dbReference type="EMBL" id="AE003852">
    <property type="protein sequence ID" value="AAF95792.1"/>
    <property type="molecule type" value="Genomic_DNA"/>
</dbReference>
<dbReference type="PIR" id="A82050">
    <property type="entry name" value="A82050"/>
</dbReference>
<dbReference type="RefSeq" id="NP_232279.1">
    <property type="nucleotide sequence ID" value="NC_002505.1"/>
</dbReference>
<dbReference type="RefSeq" id="WP_000005325.1">
    <property type="nucleotide sequence ID" value="NZ_LT906614.1"/>
</dbReference>
<dbReference type="SMR" id="Q9KNT0"/>
<dbReference type="STRING" id="243277.VC_2651"/>
<dbReference type="DNASU" id="2615668"/>
<dbReference type="EnsemblBacteria" id="AAF95792">
    <property type="protein sequence ID" value="AAF95792"/>
    <property type="gene ID" value="VC_2651"/>
</dbReference>
<dbReference type="KEGG" id="vch:VC_2651"/>
<dbReference type="PATRIC" id="fig|243277.26.peg.2528"/>
<dbReference type="eggNOG" id="COG0240">
    <property type="taxonomic scope" value="Bacteria"/>
</dbReference>
<dbReference type="HOGENOM" id="CLU_033449_0_2_6"/>
<dbReference type="UniPathway" id="UPA00940"/>
<dbReference type="Proteomes" id="UP000000584">
    <property type="component" value="Chromosome 1"/>
</dbReference>
<dbReference type="GO" id="GO:0005829">
    <property type="term" value="C:cytosol"/>
    <property type="evidence" value="ECO:0000318"/>
    <property type="project" value="GO_Central"/>
</dbReference>
<dbReference type="GO" id="GO:0047952">
    <property type="term" value="F:glycerol-3-phosphate dehydrogenase [NAD(P)+] activity"/>
    <property type="evidence" value="ECO:0000318"/>
    <property type="project" value="GO_Central"/>
</dbReference>
<dbReference type="GO" id="GO:0051287">
    <property type="term" value="F:NAD binding"/>
    <property type="evidence" value="ECO:0007669"/>
    <property type="project" value="InterPro"/>
</dbReference>
<dbReference type="GO" id="GO:0005975">
    <property type="term" value="P:carbohydrate metabolic process"/>
    <property type="evidence" value="ECO:0007669"/>
    <property type="project" value="InterPro"/>
</dbReference>
<dbReference type="GO" id="GO:0046167">
    <property type="term" value="P:glycerol-3-phosphate biosynthetic process"/>
    <property type="evidence" value="ECO:0007669"/>
    <property type="project" value="UniProtKB-UniRule"/>
</dbReference>
<dbReference type="GO" id="GO:0046168">
    <property type="term" value="P:glycerol-3-phosphate catabolic process"/>
    <property type="evidence" value="ECO:0007669"/>
    <property type="project" value="InterPro"/>
</dbReference>
<dbReference type="GO" id="GO:0006072">
    <property type="term" value="P:glycerol-3-phosphate metabolic process"/>
    <property type="evidence" value="ECO:0000318"/>
    <property type="project" value="GO_Central"/>
</dbReference>
<dbReference type="GO" id="GO:0046474">
    <property type="term" value="P:glycerophospholipid biosynthetic process"/>
    <property type="evidence" value="ECO:0000318"/>
    <property type="project" value="GO_Central"/>
</dbReference>
<dbReference type="FunFam" id="1.10.1040.10:FF:000001">
    <property type="entry name" value="Glycerol-3-phosphate dehydrogenase [NAD(P)+]"/>
    <property type="match status" value="1"/>
</dbReference>
<dbReference type="FunFam" id="3.40.50.720:FF:000019">
    <property type="entry name" value="Glycerol-3-phosphate dehydrogenase [NAD(P)+]"/>
    <property type="match status" value="1"/>
</dbReference>
<dbReference type="Gene3D" id="1.10.1040.10">
    <property type="entry name" value="N-(1-d-carboxylethyl)-l-norvaline Dehydrogenase, domain 2"/>
    <property type="match status" value="1"/>
</dbReference>
<dbReference type="Gene3D" id="3.40.50.720">
    <property type="entry name" value="NAD(P)-binding Rossmann-like Domain"/>
    <property type="match status" value="1"/>
</dbReference>
<dbReference type="HAMAP" id="MF_00394">
    <property type="entry name" value="NAD_Glyc3P_dehydrog"/>
    <property type="match status" value="1"/>
</dbReference>
<dbReference type="InterPro" id="IPR008927">
    <property type="entry name" value="6-PGluconate_DH-like_C_sf"/>
</dbReference>
<dbReference type="InterPro" id="IPR013328">
    <property type="entry name" value="6PGD_dom2"/>
</dbReference>
<dbReference type="InterPro" id="IPR006168">
    <property type="entry name" value="G3P_DH_NAD-dep"/>
</dbReference>
<dbReference type="InterPro" id="IPR006109">
    <property type="entry name" value="G3P_DH_NAD-dep_C"/>
</dbReference>
<dbReference type="InterPro" id="IPR011128">
    <property type="entry name" value="G3P_DH_NAD-dep_N"/>
</dbReference>
<dbReference type="InterPro" id="IPR036291">
    <property type="entry name" value="NAD(P)-bd_dom_sf"/>
</dbReference>
<dbReference type="NCBIfam" id="NF000939">
    <property type="entry name" value="PRK00094.1-1"/>
    <property type="match status" value="1"/>
</dbReference>
<dbReference type="NCBIfam" id="NF000940">
    <property type="entry name" value="PRK00094.1-2"/>
    <property type="match status" value="1"/>
</dbReference>
<dbReference type="NCBIfam" id="NF000942">
    <property type="entry name" value="PRK00094.1-4"/>
    <property type="match status" value="1"/>
</dbReference>
<dbReference type="PANTHER" id="PTHR11728">
    <property type="entry name" value="GLYCEROL-3-PHOSPHATE DEHYDROGENASE"/>
    <property type="match status" value="1"/>
</dbReference>
<dbReference type="PANTHER" id="PTHR11728:SF1">
    <property type="entry name" value="GLYCEROL-3-PHOSPHATE DEHYDROGENASE [NAD(+)] 2, CHLOROPLASTIC"/>
    <property type="match status" value="1"/>
</dbReference>
<dbReference type="Pfam" id="PF07479">
    <property type="entry name" value="NAD_Gly3P_dh_C"/>
    <property type="match status" value="1"/>
</dbReference>
<dbReference type="Pfam" id="PF01210">
    <property type="entry name" value="NAD_Gly3P_dh_N"/>
    <property type="match status" value="1"/>
</dbReference>
<dbReference type="PIRSF" id="PIRSF000114">
    <property type="entry name" value="Glycerol-3-P_dh"/>
    <property type="match status" value="1"/>
</dbReference>
<dbReference type="PRINTS" id="PR00077">
    <property type="entry name" value="GPDHDRGNASE"/>
</dbReference>
<dbReference type="SUPFAM" id="SSF48179">
    <property type="entry name" value="6-phosphogluconate dehydrogenase C-terminal domain-like"/>
    <property type="match status" value="1"/>
</dbReference>
<dbReference type="SUPFAM" id="SSF51735">
    <property type="entry name" value="NAD(P)-binding Rossmann-fold domains"/>
    <property type="match status" value="1"/>
</dbReference>
<dbReference type="PROSITE" id="PS00957">
    <property type="entry name" value="NAD_G3PDH"/>
    <property type="match status" value="1"/>
</dbReference>